<sequence length="427" mass="47308">MLDIQLLRKDAALVAERLAARGFAFDAARFDALEAERKTIQTRTQDAQSRRNTLSKQIGMLKGKGEDTTAVMAEVGGLGDELKQLETRLSELQAELNDFLMGIPNLPHESVAPGKDETANVEVSRWGTPRQFDFAVRDHVDLGEGLGQLDFAAAVKITGSRFSVMRGGLARLHRALAQFMLDLHTTEHGYTEVYVPYVVNAESMRGTGQLPKFEEDLFHVPRSDADRLYLIPTAEVPVTNLVRDEIVAAEALPLKFVAHTPCFRSEAGSYGRDTRGMIRQHQFDKVELVQMVRPEDSYAALEGLAAHAETVLQRLGLPYRKMALCSGDMGFSAAKTYDLEVWLPAQNTYREISSCSNFEAFQARRMQARFREGQGKPELLHTLNGSGLAVGRTLVAILENYQNADGSITVPEALRPWMGGVERLTPA</sequence>
<evidence type="ECO:0000255" key="1">
    <source>
        <dbReference type="HAMAP-Rule" id="MF_00176"/>
    </source>
</evidence>
<feature type="chain" id="PRO_1000019859" description="Serine--tRNA ligase">
    <location>
        <begin position="1"/>
        <end position="427"/>
    </location>
</feature>
<feature type="binding site" evidence="1">
    <location>
        <begin position="233"/>
        <end position="235"/>
    </location>
    <ligand>
        <name>L-serine</name>
        <dbReference type="ChEBI" id="CHEBI:33384"/>
    </ligand>
</feature>
<feature type="binding site" evidence="1">
    <location>
        <begin position="264"/>
        <end position="266"/>
    </location>
    <ligand>
        <name>ATP</name>
        <dbReference type="ChEBI" id="CHEBI:30616"/>
    </ligand>
</feature>
<feature type="binding site" evidence="1">
    <location>
        <position position="287"/>
    </location>
    <ligand>
        <name>L-serine</name>
        <dbReference type="ChEBI" id="CHEBI:33384"/>
    </ligand>
</feature>
<feature type="binding site" evidence="1">
    <location>
        <begin position="351"/>
        <end position="354"/>
    </location>
    <ligand>
        <name>ATP</name>
        <dbReference type="ChEBI" id="CHEBI:30616"/>
    </ligand>
</feature>
<feature type="binding site" evidence="1">
    <location>
        <position position="386"/>
    </location>
    <ligand>
        <name>L-serine</name>
        <dbReference type="ChEBI" id="CHEBI:33384"/>
    </ligand>
</feature>
<proteinExistence type="inferred from homology"/>
<accession>Q3SJH9</accession>
<organism>
    <name type="scientific">Thiobacillus denitrificans (strain ATCC 25259 / T1)</name>
    <dbReference type="NCBI Taxonomy" id="292415"/>
    <lineage>
        <taxon>Bacteria</taxon>
        <taxon>Pseudomonadati</taxon>
        <taxon>Pseudomonadota</taxon>
        <taxon>Betaproteobacteria</taxon>
        <taxon>Nitrosomonadales</taxon>
        <taxon>Thiobacillaceae</taxon>
        <taxon>Thiobacillus</taxon>
    </lineage>
</organism>
<keyword id="KW-0030">Aminoacyl-tRNA synthetase</keyword>
<keyword id="KW-0067">ATP-binding</keyword>
<keyword id="KW-0963">Cytoplasm</keyword>
<keyword id="KW-0436">Ligase</keyword>
<keyword id="KW-0547">Nucleotide-binding</keyword>
<keyword id="KW-0648">Protein biosynthesis</keyword>
<keyword id="KW-1185">Reference proteome</keyword>
<reference key="1">
    <citation type="journal article" date="2006" name="J. Bacteriol.">
        <title>The genome sequence of the obligately chemolithoautotrophic, facultatively anaerobic bacterium Thiobacillus denitrificans.</title>
        <authorList>
            <person name="Beller H.R."/>
            <person name="Chain P.S."/>
            <person name="Letain T.E."/>
            <person name="Chakicherla A."/>
            <person name="Larimer F.W."/>
            <person name="Richardson P.M."/>
            <person name="Coleman M.A."/>
            <person name="Wood A.P."/>
            <person name="Kelly D.P."/>
        </authorList>
    </citation>
    <scope>NUCLEOTIDE SEQUENCE [LARGE SCALE GENOMIC DNA]</scope>
    <source>
        <strain>ATCC 25259 / T1</strain>
    </source>
</reference>
<comment type="function">
    <text evidence="1">Catalyzes the attachment of serine to tRNA(Ser). Is also able to aminoacylate tRNA(Sec) with serine, to form the misacylated tRNA L-seryl-tRNA(Sec), which will be further converted into selenocysteinyl-tRNA(Sec).</text>
</comment>
<comment type="catalytic activity">
    <reaction evidence="1">
        <text>tRNA(Ser) + L-serine + ATP = L-seryl-tRNA(Ser) + AMP + diphosphate + H(+)</text>
        <dbReference type="Rhea" id="RHEA:12292"/>
        <dbReference type="Rhea" id="RHEA-COMP:9669"/>
        <dbReference type="Rhea" id="RHEA-COMP:9703"/>
        <dbReference type="ChEBI" id="CHEBI:15378"/>
        <dbReference type="ChEBI" id="CHEBI:30616"/>
        <dbReference type="ChEBI" id="CHEBI:33019"/>
        <dbReference type="ChEBI" id="CHEBI:33384"/>
        <dbReference type="ChEBI" id="CHEBI:78442"/>
        <dbReference type="ChEBI" id="CHEBI:78533"/>
        <dbReference type="ChEBI" id="CHEBI:456215"/>
        <dbReference type="EC" id="6.1.1.11"/>
    </reaction>
</comment>
<comment type="catalytic activity">
    <reaction evidence="1">
        <text>tRNA(Sec) + L-serine + ATP = L-seryl-tRNA(Sec) + AMP + diphosphate + H(+)</text>
        <dbReference type="Rhea" id="RHEA:42580"/>
        <dbReference type="Rhea" id="RHEA-COMP:9742"/>
        <dbReference type="Rhea" id="RHEA-COMP:10128"/>
        <dbReference type="ChEBI" id="CHEBI:15378"/>
        <dbReference type="ChEBI" id="CHEBI:30616"/>
        <dbReference type="ChEBI" id="CHEBI:33019"/>
        <dbReference type="ChEBI" id="CHEBI:33384"/>
        <dbReference type="ChEBI" id="CHEBI:78442"/>
        <dbReference type="ChEBI" id="CHEBI:78533"/>
        <dbReference type="ChEBI" id="CHEBI:456215"/>
        <dbReference type="EC" id="6.1.1.11"/>
    </reaction>
</comment>
<comment type="pathway">
    <text evidence="1">Aminoacyl-tRNA biosynthesis; selenocysteinyl-tRNA(Sec) biosynthesis; L-seryl-tRNA(Sec) from L-serine and tRNA(Sec): step 1/1.</text>
</comment>
<comment type="subunit">
    <text evidence="1">Homodimer. The tRNA molecule binds across the dimer.</text>
</comment>
<comment type="subcellular location">
    <subcellularLocation>
        <location evidence="1">Cytoplasm</location>
    </subcellularLocation>
</comment>
<comment type="domain">
    <text evidence="1">Consists of two distinct domains, a catalytic core and a N-terminal extension that is involved in tRNA binding.</text>
</comment>
<comment type="similarity">
    <text evidence="1">Belongs to the class-II aminoacyl-tRNA synthetase family. Type-1 seryl-tRNA synthetase subfamily.</text>
</comment>
<dbReference type="EC" id="6.1.1.11" evidence="1"/>
<dbReference type="EMBL" id="CP000116">
    <property type="protein sequence ID" value="AAZ97182.1"/>
    <property type="molecule type" value="Genomic_DNA"/>
</dbReference>
<dbReference type="RefSeq" id="WP_011311741.1">
    <property type="nucleotide sequence ID" value="NC_007404.1"/>
</dbReference>
<dbReference type="SMR" id="Q3SJH9"/>
<dbReference type="STRING" id="292415.Tbd_1229"/>
<dbReference type="KEGG" id="tbd:Tbd_1229"/>
<dbReference type="eggNOG" id="COG0172">
    <property type="taxonomic scope" value="Bacteria"/>
</dbReference>
<dbReference type="HOGENOM" id="CLU_023797_1_1_4"/>
<dbReference type="OrthoDB" id="9804647at2"/>
<dbReference type="UniPathway" id="UPA00906">
    <property type="reaction ID" value="UER00895"/>
</dbReference>
<dbReference type="Proteomes" id="UP000008291">
    <property type="component" value="Chromosome"/>
</dbReference>
<dbReference type="GO" id="GO:0005737">
    <property type="term" value="C:cytoplasm"/>
    <property type="evidence" value="ECO:0007669"/>
    <property type="project" value="UniProtKB-SubCell"/>
</dbReference>
<dbReference type="GO" id="GO:0005524">
    <property type="term" value="F:ATP binding"/>
    <property type="evidence" value="ECO:0007669"/>
    <property type="project" value="UniProtKB-UniRule"/>
</dbReference>
<dbReference type="GO" id="GO:0004828">
    <property type="term" value="F:serine-tRNA ligase activity"/>
    <property type="evidence" value="ECO:0007669"/>
    <property type="project" value="UniProtKB-UniRule"/>
</dbReference>
<dbReference type="GO" id="GO:0016260">
    <property type="term" value="P:selenocysteine biosynthetic process"/>
    <property type="evidence" value="ECO:0007669"/>
    <property type="project" value="UniProtKB-UniRule"/>
</dbReference>
<dbReference type="GO" id="GO:0006434">
    <property type="term" value="P:seryl-tRNA aminoacylation"/>
    <property type="evidence" value="ECO:0007669"/>
    <property type="project" value="UniProtKB-UniRule"/>
</dbReference>
<dbReference type="CDD" id="cd00770">
    <property type="entry name" value="SerRS_core"/>
    <property type="match status" value="1"/>
</dbReference>
<dbReference type="Gene3D" id="3.30.930.10">
    <property type="entry name" value="Bira Bifunctional Protein, Domain 2"/>
    <property type="match status" value="1"/>
</dbReference>
<dbReference type="Gene3D" id="1.10.287.40">
    <property type="entry name" value="Serine-tRNA synthetase, tRNA binding domain"/>
    <property type="match status" value="1"/>
</dbReference>
<dbReference type="HAMAP" id="MF_00176">
    <property type="entry name" value="Ser_tRNA_synth_type1"/>
    <property type="match status" value="1"/>
</dbReference>
<dbReference type="InterPro" id="IPR002314">
    <property type="entry name" value="aa-tRNA-synt_IIb"/>
</dbReference>
<dbReference type="InterPro" id="IPR006195">
    <property type="entry name" value="aa-tRNA-synth_II"/>
</dbReference>
<dbReference type="InterPro" id="IPR045864">
    <property type="entry name" value="aa-tRNA-synth_II/BPL/LPL"/>
</dbReference>
<dbReference type="InterPro" id="IPR002317">
    <property type="entry name" value="Ser-tRNA-ligase_type_1"/>
</dbReference>
<dbReference type="InterPro" id="IPR015866">
    <property type="entry name" value="Ser-tRNA-synth_1_N"/>
</dbReference>
<dbReference type="InterPro" id="IPR042103">
    <property type="entry name" value="SerRS_1_N_sf"/>
</dbReference>
<dbReference type="InterPro" id="IPR033729">
    <property type="entry name" value="SerRS_core"/>
</dbReference>
<dbReference type="InterPro" id="IPR010978">
    <property type="entry name" value="tRNA-bd_arm"/>
</dbReference>
<dbReference type="NCBIfam" id="TIGR00414">
    <property type="entry name" value="serS"/>
    <property type="match status" value="1"/>
</dbReference>
<dbReference type="PANTHER" id="PTHR43697:SF1">
    <property type="entry name" value="SERINE--TRNA LIGASE"/>
    <property type="match status" value="1"/>
</dbReference>
<dbReference type="PANTHER" id="PTHR43697">
    <property type="entry name" value="SERYL-TRNA SYNTHETASE"/>
    <property type="match status" value="1"/>
</dbReference>
<dbReference type="Pfam" id="PF02403">
    <property type="entry name" value="Seryl_tRNA_N"/>
    <property type="match status" value="1"/>
</dbReference>
<dbReference type="Pfam" id="PF00587">
    <property type="entry name" value="tRNA-synt_2b"/>
    <property type="match status" value="1"/>
</dbReference>
<dbReference type="PIRSF" id="PIRSF001529">
    <property type="entry name" value="Ser-tRNA-synth_IIa"/>
    <property type="match status" value="1"/>
</dbReference>
<dbReference type="PRINTS" id="PR00981">
    <property type="entry name" value="TRNASYNTHSER"/>
</dbReference>
<dbReference type="SUPFAM" id="SSF55681">
    <property type="entry name" value="Class II aaRS and biotin synthetases"/>
    <property type="match status" value="1"/>
</dbReference>
<dbReference type="SUPFAM" id="SSF46589">
    <property type="entry name" value="tRNA-binding arm"/>
    <property type="match status" value="1"/>
</dbReference>
<dbReference type="PROSITE" id="PS50862">
    <property type="entry name" value="AA_TRNA_LIGASE_II"/>
    <property type="match status" value="1"/>
</dbReference>
<name>SYS_THIDA</name>
<protein>
    <recommendedName>
        <fullName evidence="1">Serine--tRNA ligase</fullName>
        <ecNumber evidence="1">6.1.1.11</ecNumber>
    </recommendedName>
    <alternativeName>
        <fullName evidence="1">Seryl-tRNA synthetase</fullName>
        <shortName evidence="1">SerRS</shortName>
    </alternativeName>
    <alternativeName>
        <fullName evidence="1">Seryl-tRNA(Ser/Sec) synthetase</fullName>
    </alternativeName>
</protein>
<gene>
    <name evidence="1" type="primary">serS</name>
    <name type="ordered locus">Tbd_1229</name>
</gene>